<feature type="chain" id="PRO_1000081595" description="Large ribosomal subunit protein bL35">
    <location>
        <begin position="1"/>
        <end position="66"/>
    </location>
</feature>
<feature type="region of interest" description="Disordered" evidence="2">
    <location>
        <begin position="1"/>
        <end position="26"/>
    </location>
</feature>
<feature type="compositionally biased region" description="Basic residues" evidence="2">
    <location>
        <begin position="1"/>
        <end position="24"/>
    </location>
</feature>
<accession>A7GTM1</accession>
<sequence length="66" mass="7554">MPKQKTHRGAAKRFKKTGSGKLKRDHAYTSHLFANKSTKAKRKLRKAGLVSAGDYKRIRQMLDNLK</sequence>
<keyword id="KW-0687">Ribonucleoprotein</keyword>
<keyword id="KW-0689">Ribosomal protein</keyword>
<protein>
    <recommendedName>
        <fullName evidence="1">Large ribosomal subunit protein bL35</fullName>
    </recommendedName>
    <alternativeName>
        <fullName evidence="3">50S ribosomal protein L35</fullName>
    </alternativeName>
</protein>
<organism>
    <name type="scientific">Bacillus cytotoxicus (strain DSM 22905 / CIP 110041 / 391-98 / NVH 391-98)</name>
    <dbReference type="NCBI Taxonomy" id="315749"/>
    <lineage>
        <taxon>Bacteria</taxon>
        <taxon>Bacillati</taxon>
        <taxon>Bacillota</taxon>
        <taxon>Bacilli</taxon>
        <taxon>Bacillales</taxon>
        <taxon>Bacillaceae</taxon>
        <taxon>Bacillus</taxon>
        <taxon>Bacillus cereus group</taxon>
    </lineage>
</organism>
<gene>
    <name evidence="1" type="primary">rpmI</name>
    <name type="ordered locus">Bcer98_3260</name>
</gene>
<comment type="similarity">
    <text evidence="1">Belongs to the bacterial ribosomal protein bL35 family.</text>
</comment>
<proteinExistence type="inferred from homology"/>
<reference key="1">
    <citation type="journal article" date="2008" name="Chem. Biol. Interact.">
        <title>Extending the Bacillus cereus group genomics to putative food-borne pathogens of different toxicity.</title>
        <authorList>
            <person name="Lapidus A."/>
            <person name="Goltsman E."/>
            <person name="Auger S."/>
            <person name="Galleron N."/>
            <person name="Segurens B."/>
            <person name="Dossat C."/>
            <person name="Land M.L."/>
            <person name="Broussolle V."/>
            <person name="Brillard J."/>
            <person name="Guinebretiere M.-H."/>
            <person name="Sanchis V."/>
            <person name="Nguen-the C."/>
            <person name="Lereclus D."/>
            <person name="Richardson P."/>
            <person name="Wincker P."/>
            <person name="Weissenbach J."/>
            <person name="Ehrlich S.D."/>
            <person name="Sorokin A."/>
        </authorList>
    </citation>
    <scope>NUCLEOTIDE SEQUENCE [LARGE SCALE GENOMIC DNA]</scope>
    <source>
        <strain>DSM 22905 / CIP 110041 / 391-98 / NVH 391-98</strain>
    </source>
</reference>
<dbReference type="EMBL" id="CP000764">
    <property type="protein sequence ID" value="ABS23479.1"/>
    <property type="molecule type" value="Genomic_DNA"/>
</dbReference>
<dbReference type="RefSeq" id="WP_012095718.1">
    <property type="nucleotide sequence ID" value="NC_009674.1"/>
</dbReference>
<dbReference type="SMR" id="A7GTM1"/>
<dbReference type="STRING" id="315749.Bcer98_3260"/>
<dbReference type="GeneID" id="33898505"/>
<dbReference type="KEGG" id="bcy:Bcer98_3260"/>
<dbReference type="eggNOG" id="COG0291">
    <property type="taxonomic scope" value="Bacteria"/>
</dbReference>
<dbReference type="HOGENOM" id="CLU_169643_3_0_9"/>
<dbReference type="OrthoDB" id="47476at2"/>
<dbReference type="Proteomes" id="UP000002300">
    <property type="component" value="Chromosome"/>
</dbReference>
<dbReference type="GO" id="GO:0022625">
    <property type="term" value="C:cytosolic large ribosomal subunit"/>
    <property type="evidence" value="ECO:0007669"/>
    <property type="project" value="TreeGrafter"/>
</dbReference>
<dbReference type="GO" id="GO:0003735">
    <property type="term" value="F:structural constituent of ribosome"/>
    <property type="evidence" value="ECO:0007669"/>
    <property type="project" value="InterPro"/>
</dbReference>
<dbReference type="GO" id="GO:0006412">
    <property type="term" value="P:translation"/>
    <property type="evidence" value="ECO:0007669"/>
    <property type="project" value="UniProtKB-UniRule"/>
</dbReference>
<dbReference type="FunFam" id="4.10.410.60:FF:000001">
    <property type="entry name" value="50S ribosomal protein L35"/>
    <property type="match status" value="1"/>
</dbReference>
<dbReference type="Gene3D" id="4.10.410.60">
    <property type="match status" value="1"/>
</dbReference>
<dbReference type="HAMAP" id="MF_00514">
    <property type="entry name" value="Ribosomal_bL35"/>
    <property type="match status" value="1"/>
</dbReference>
<dbReference type="InterPro" id="IPR001706">
    <property type="entry name" value="Ribosomal_bL35"/>
</dbReference>
<dbReference type="InterPro" id="IPR021137">
    <property type="entry name" value="Ribosomal_bL35-like"/>
</dbReference>
<dbReference type="InterPro" id="IPR018265">
    <property type="entry name" value="Ribosomal_bL35_CS"/>
</dbReference>
<dbReference type="InterPro" id="IPR037229">
    <property type="entry name" value="Ribosomal_bL35_sf"/>
</dbReference>
<dbReference type="NCBIfam" id="TIGR00001">
    <property type="entry name" value="rpmI_bact"/>
    <property type="match status" value="1"/>
</dbReference>
<dbReference type="PANTHER" id="PTHR33343">
    <property type="entry name" value="54S RIBOSOMAL PROTEIN BL35M"/>
    <property type="match status" value="1"/>
</dbReference>
<dbReference type="PANTHER" id="PTHR33343:SF1">
    <property type="entry name" value="LARGE RIBOSOMAL SUBUNIT PROTEIN BL35M"/>
    <property type="match status" value="1"/>
</dbReference>
<dbReference type="Pfam" id="PF01632">
    <property type="entry name" value="Ribosomal_L35p"/>
    <property type="match status" value="1"/>
</dbReference>
<dbReference type="PRINTS" id="PR00064">
    <property type="entry name" value="RIBOSOMALL35"/>
</dbReference>
<dbReference type="SUPFAM" id="SSF143034">
    <property type="entry name" value="L35p-like"/>
    <property type="match status" value="1"/>
</dbReference>
<dbReference type="PROSITE" id="PS00936">
    <property type="entry name" value="RIBOSOMAL_L35"/>
    <property type="match status" value="1"/>
</dbReference>
<evidence type="ECO:0000255" key="1">
    <source>
        <dbReference type="HAMAP-Rule" id="MF_00514"/>
    </source>
</evidence>
<evidence type="ECO:0000256" key="2">
    <source>
        <dbReference type="SAM" id="MobiDB-lite"/>
    </source>
</evidence>
<evidence type="ECO:0000305" key="3"/>
<name>RL35_BACCN</name>